<comment type="function">
    <text>Core component of nucleosome. Nucleosomes wrap and compact DNA into chromatin, limiting DNA accessibility to the cellular machineries which require DNA as a template. Histones thereby play a central role in transcription regulation, DNA repair, DNA replication and chromosomal stability. DNA accessibility is regulated via a complex set of post-translational modifications of histones, also called histone code, and nucleosome remodeling.</text>
</comment>
<comment type="subunit">
    <text evidence="11">The nucleosome is a histone octamer containing two molecules each of H2A, H2B, H3 and H4 assembled in one H3-H4 heterotetramer and two H2A-H2B heterodimers. The octamer wraps approximately 147 bp of DNA.</text>
</comment>
<comment type="subcellular location">
    <subcellularLocation>
        <location evidence="9">Nucleus</location>
    </subcellularLocation>
    <subcellularLocation>
        <location evidence="9">Chromosome</location>
    </subcellularLocation>
</comment>
<comment type="PTM">
    <text evidence="2">Monoubiquitination at Lys-35 (H2BK34Ub) by the MSL1/MSL2 dimer is required for histone H3 'Lys-4' (H3K4me) and 'Lys-79' (H3K79me) methylation and transcription activation at specific gene loci, such as HOXA9 and MEIS1 loci. Similarly, monoubiquitination at Lys-121 (H2BK120Ub) by the RNF20/40 complex gives a specific tag for epigenetic transcriptional activation and is also prerequisite for histone H3 'Lys-4' and 'Lys-79' methylation. It also functions cooperatively with the FACT dimer to stimulate elongation by RNA polymerase II. H2BK120Ub also acts as a regulator of mRNA splicing: deubiquitination by USP49 is required for efficient cotranscriptional splicing of a large set of exons (By similarity).</text>
</comment>
<comment type="PTM">
    <text evidence="9 10 12 18">Phosphorylated on Ser-15 (H2BS14ph) by STK4/MST1 during apoptosis; which facilitates apoptotic chromatin condensation (PubMed:15197225, PubMed:16039583). Also phosphorylated on Ser-15 in response to DNA double strand breaks (DSBs), and in correlation with somatic hypermutation and immunoglobulin class-switch recombination (PubMed:15197225). Phosphorylation at Ser-37 (H2BS36ph) by AMPK in response to stress promotes transcription (PubMed:20647423, PubMed:32822587).</text>
</comment>
<comment type="PTM">
    <text evidence="3">GlcNAcylation at Ser-113 promotes monoubiquitination of Lys-121. It fluctuates in response to extracellular glucose, and associates with transcribed genes (By similarity).</text>
</comment>
<comment type="PTM">
    <text evidence="2 18">ADP-ribosylated by PARP1 or PARP2 on Ser-7 (H2BS6ADPr) in response to DNA damage (By similarity). H2BS6ADPr promotes recruitment of CHD1L (By similarity). Mono-ADP-ribosylated on Glu-3 (H2BE2ADPr) by PARP3 in response to single-strand breaks (By similarity). Poly ADP-ribosylation on Glu-36 (H2BE35ADPr) by PARP1 regulates adipogenesis: it inhibits phosphorylation at Ser-37 (H2BS36ph), thereby blocking expression of pro-adipogenetic genes (PubMed:32822587).</text>
</comment>
<comment type="PTM">
    <text evidence="13">Crotonylation (Kcr) is specifically present in male germ cells and marks testis-specific genes in post-meiotic cells, including X-linked genes that escape sex chromosome inactivation in haploid cells. Crotonylation marks active promoters and enhancers and confers resistance to transcriptional repressors. It is also associated with post-meiotically activated genes on autosomes.</text>
</comment>
<comment type="PTM">
    <text evidence="16">Hydroxybutyrylation of histones is induced by starvation.</text>
</comment>
<comment type="PTM">
    <text evidence="2">Lactylated in macrophages by EP300/P300 by using lactoyl-CoA directly derived from endogenous or exogenous lactate, leading to stimulates gene transcription.</text>
</comment>
<comment type="miscellaneous">
    <text evidence="20">The human orthologous protein seems not to exist.</text>
</comment>
<comment type="similarity">
    <text evidence="20">Belongs to the histone H2B family.</text>
</comment>
<evidence type="ECO:0000250" key="1">
    <source>
        <dbReference type="UniProtKB" id="P23527"/>
    </source>
</evidence>
<evidence type="ECO:0000250" key="2">
    <source>
        <dbReference type="UniProtKB" id="P33778"/>
    </source>
</evidence>
<evidence type="ECO:0000250" key="3">
    <source>
        <dbReference type="UniProtKB" id="P62807"/>
    </source>
</evidence>
<evidence type="ECO:0000250" key="4">
    <source>
        <dbReference type="UniProtKB" id="P62808"/>
    </source>
</evidence>
<evidence type="ECO:0000250" key="5">
    <source>
        <dbReference type="UniProtKB" id="Q00729"/>
    </source>
</evidence>
<evidence type="ECO:0000250" key="6">
    <source>
        <dbReference type="UniProtKB" id="Q5QNW6"/>
    </source>
</evidence>
<evidence type="ECO:0000250" key="7">
    <source>
        <dbReference type="UniProtKB" id="Q96A08"/>
    </source>
</evidence>
<evidence type="ECO:0000256" key="8">
    <source>
        <dbReference type="SAM" id="MobiDB-lite"/>
    </source>
</evidence>
<evidence type="ECO:0000269" key="9">
    <source>
    </source>
</evidence>
<evidence type="ECO:0000269" key="10">
    <source>
    </source>
</evidence>
<evidence type="ECO:0000269" key="11">
    <source>
    </source>
</evidence>
<evidence type="ECO:0000269" key="12">
    <source>
    </source>
</evidence>
<evidence type="ECO:0000269" key="13">
    <source>
    </source>
</evidence>
<evidence type="ECO:0000269" key="14">
    <source>
    </source>
</evidence>
<evidence type="ECO:0000269" key="15">
    <source>
    </source>
</evidence>
<evidence type="ECO:0000269" key="16">
    <source>
    </source>
</evidence>
<evidence type="ECO:0000269" key="17">
    <source>
    </source>
</evidence>
<evidence type="ECO:0000269" key="18">
    <source>
    </source>
</evidence>
<evidence type="ECO:0000303" key="19">
    <source>
    </source>
</evidence>
<evidence type="ECO:0000305" key="20"/>
<evidence type="ECO:0000312" key="21">
    <source>
        <dbReference type="MGI" id="MGI:1925553"/>
    </source>
</evidence>
<evidence type="ECO:0007829" key="22">
    <source>
        <dbReference type="PDB" id="5B1M"/>
    </source>
</evidence>
<protein>
    <recommendedName>
        <fullName evidence="21">H2B.U histone 2</fullName>
    </recommendedName>
    <alternativeName>
        <fullName>Histone H2B type 3-A</fullName>
    </alternativeName>
</protein>
<accession>Q9D2U9</accession>
<organism>
    <name type="scientific">Mus musculus</name>
    <name type="common">Mouse</name>
    <dbReference type="NCBI Taxonomy" id="10090"/>
    <lineage>
        <taxon>Eukaryota</taxon>
        <taxon>Metazoa</taxon>
        <taxon>Chordata</taxon>
        <taxon>Craniata</taxon>
        <taxon>Vertebrata</taxon>
        <taxon>Euteleostomi</taxon>
        <taxon>Mammalia</taxon>
        <taxon>Eutheria</taxon>
        <taxon>Euarchontoglires</taxon>
        <taxon>Glires</taxon>
        <taxon>Rodentia</taxon>
        <taxon>Myomorpha</taxon>
        <taxon>Muroidea</taxon>
        <taxon>Muridae</taxon>
        <taxon>Murinae</taxon>
        <taxon>Mus</taxon>
        <taxon>Mus</taxon>
    </lineage>
</organism>
<keyword id="KW-0002">3D-structure</keyword>
<keyword id="KW-0007">Acetylation</keyword>
<keyword id="KW-0013">ADP-ribosylation</keyword>
<keyword id="KW-0158">Chromosome</keyword>
<keyword id="KW-0238">DNA-binding</keyword>
<keyword id="KW-0325">Glycoprotein</keyword>
<keyword id="KW-0379">Hydroxylation</keyword>
<keyword id="KW-1017">Isopeptide bond</keyword>
<keyword id="KW-0488">Methylation</keyword>
<keyword id="KW-0544">Nucleosome core</keyword>
<keyword id="KW-0539">Nucleus</keyword>
<keyword id="KW-0597">Phosphoprotein</keyword>
<keyword id="KW-1185">Reference proteome</keyword>
<keyword id="KW-0832">Ubl conjugation</keyword>
<gene>
    <name evidence="21" type="primary">H2bu2</name>
    <name evidence="19" type="synonym">Hist3h2ba</name>
</gene>
<dbReference type="EMBL" id="AY158942">
    <property type="protein sequence ID" value="AAO06252.1"/>
    <property type="molecule type" value="Genomic_DNA"/>
</dbReference>
<dbReference type="EMBL" id="AK018765">
    <property type="protein sequence ID" value="BAB31395.1"/>
    <property type="molecule type" value="mRNA"/>
</dbReference>
<dbReference type="EMBL" id="BC051921">
    <property type="protein sequence ID" value="AAH51921.1"/>
    <property type="molecule type" value="mRNA"/>
</dbReference>
<dbReference type="CCDS" id="CCDS24754.1"/>
<dbReference type="RefSeq" id="NP_084358.1">
    <property type="nucleotide sequence ID" value="NM_030082.4"/>
</dbReference>
<dbReference type="PDB" id="1U35">
    <property type="method" value="X-ray"/>
    <property type="resolution" value="3.00 A"/>
    <property type="chains" value="D/H=1-126"/>
</dbReference>
<dbReference type="PDB" id="2F8N">
    <property type="method" value="X-ray"/>
    <property type="resolution" value="2.90 A"/>
    <property type="chains" value="D=1-126"/>
</dbReference>
<dbReference type="PDB" id="5B1L">
    <property type="method" value="X-ray"/>
    <property type="resolution" value="2.35 A"/>
    <property type="chains" value="D/H=1-126"/>
</dbReference>
<dbReference type="PDB" id="5B1M">
    <property type="method" value="X-ray"/>
    <property type="resolution" value="2.34 A"/>
    <property type="chains" value="D/H=1-126"/>
</dbReference>
<dbReference type="PDB" id="5XM0">
    <property type="method" value="X-ray"/>
    <property type="resolution" value="2.87 A"/>
    <property type="chains" value="D/H=1-126"/>
</dbReference>
<dbReference type="PDB" id="5XM1">
    <property type="method" value="X-ray"/>
    <property type="resolution" value="3.45 A"/>
    <property type="chains" value="D/H=1-126"/>
</dbReference>
<dbReference type="PDB" id="7DBH">
    <property type="method" value="EM"/>
    <property type="resolution" value="3.60 A"/>
    <property type="chains" value="D/H=1-126"/>
</dbReference>
<dbReference type="PDB" id="7VBM">
    <property type="method" value="EM"/>
    <property type="resolution" value="3.40 A"/>
    <property type="chains" value="D/H=1-126"/>
</dbReference>
<dbReference type="PDBsum" id="1U35"/>
<dbReference type="PDBsum" id="2F8N"/>
<dbReference type="PDBsum" id="5B1L"/>
<dbReference type="PDBsum" id="5B1M"/>
<dbReference type="PDBsum" id="5XM0"/>
<dbReference type="PDBsum" id="5XM1"/>
<dbReference type="PDBsum" id="7DBH"/>
<dbReference type="PDBsum" id="7VBM"/>
<dbReference type="EMDB" id="EMD-30631"/>
<dbReference type="EMDB" id="EMD-31882"/>
<dbReference type="SMR" id="Q9D2U9"/>
<dbReference type="BioGRID" id="219314">
    <property type="interactions" value="2"/>
</dbReference>
<dbReference type="FunCoup" id="Q9D2U9">
    <property type="interactions" value="1641"/>
</dbReference>
<dbReference type="STRING" id="10090.ENSMUSP00000076397"/>
<dbReference type="GlyGen" id="Q9D2U9">
    <property type="glycosylation" value="2 sites"/>
</dbReference>
<dbReference type="iPTMnet" id="Q9D2U9"/>
<dbReference type="PhosphoSitePlus" id="Q9D2U9"/>
<dbReference type="SwissPalm" id="Q9D2U9"/>
<dbReference type="jPOST" id="Q9D2U9"/>
<dbReference type="PaxDb" id="10090-ENSMUSP00000076397"/>
<dbReference type="PeptideAtlas" id="Q9D2U9"/>
<dbReference type="ProteomicsDB" id="270918"/>
<dbReference type="DNASU" id="78303"/>
<dbReference type="Ensembl" id="ENSMUST00000078267.5">
    <property type="protein sequence ID" value="ENSMUSP00000076397.4"/>
    <property type="gene ID" value="ENSMUSG00000056895.5"/>
</dbReference>
<dbReference type="GeneID" id="78303"/>
<dbReference type="KEGG" id="mmu:78303"/>
<dbReference type="UCSC" id="uc007jcr.2">
    <property type="organism name" value="mouse"/>
</dbReference>
<dbReference type="AGR" id="MGI:1925553"/>
<dbReference type="CTD" id="78303"/>
<dbReference type="MGI" id="MGI:1925553">
    <property type="gene designation" value="H2bu2"/>
</dbReference>
<dbReference type="VEuPathDB" id="HostDB:ENSMUSG00000056895"/>
<dbReference type="eggNOG" id="KOG1744">
    <property type="taxonomic scope" value="Eukaryota"/>
</dbReference>
<dbReference type="GeneTree" id="ENSGT01110000267152"/>
<dbReference type="HOGENOM" id="CLU_075666_2_1_1"/>
<dbReference type="InParanoid" id="Q9D2U9"/>
<dbReference type="OMA" id="ANIACNS"/>
<dbReference type="OrthoDB" id="1733721at2759"/>
<dbReference type="PhylomeDB" id="Q9D2U9"/>
<dbReference type="TreeFam" id="TF300212"/>
<dbReference type="BioGRID-ORCS" id="78303">
    <property type="hits" value="8 hits in 74 CRISPR screens"/>
</dbReference>
<dbReference type="EvolutionaryTrace" id="Q9D2U9"/>
<dbReference type="PRO" id="PR:Q9D2U9"/>
<dbReference type="Proteomes" id="UP000000589">
    <property type="component" value="Chromosome 11"/>
</dbReference>
<dbReference type="RNAct" id="Q9D2U9">
    <property type="molecule type" value="protein"/>
</dbReference>
<dbReference type="Bgee" id="ENSMUSG00000056895">
    <property type="expression patterns" value="Expressed in medial ganglionic eminence and 163 other cell types or tissues"/>
</dbReference>
<dbReference type="GO" id="GO:0005654">
    <property type="term" value="C:nucleoplasm"/>
    <property type="evidence" value="ECO:0000304"/>
    <property type="project" value="Reactome"/>
</dbReference>
<dbReference type="GO" id="GO:0000786">
    <property type="term" value="C:nucleosome"/>
    <property type="evidence" value="ECO:0007669"/>
    <property type="project" value="UniProtKB-KW"/>
</dbReference>
<dbReference type="GO" id="GO:0003677">
    <property type="term" value="F:DNA binding"/>
    <property type="evidence" value="ECO:0007669"/>
    <property type="project" value="UniProtKB-KW"/>
</dbReference>
<dbReference type="GO" id="GO:0046982">
    <property type="term" value="F:protein heterodimerization activity"/>
    <property type="evidence" value="ECO:0007669"/>
    <property type="project" value="InterPro"/>
</dbReference>
<dbReference type="GO" id="GO:0030527">
    <property type="term" value="F:structural constituent of chromatin"/>
    <property type="evidence" value="ECO:0007669"/>
    <property type="project" value="InterPro"/>
</dbReference>
<dbReference type="CDD" id="cd22910">
    <property type="entry name" value="HFD_H2B"/>
    <property type="match status" value="1"/>
</dbReference>
<dbReference type="FunFam" id="1.10.20.10:FF:000003">
    <property type="entry name" value="Histone H2B"/>
    <property type="match status" value="1"/>
</dbReference>
<dbReference type="Gene3D" id="1.10.20.10">
    <property type="entry name" value="Histone, subunit A"/>
    <property type="match status" value="1"/>
</dbReference>
<dbReference type="InterPro" id="IPR009072">
    <property type="entry name" value="Histone-fold"/>
</dbReference>
<dbReference type="InterPro" id="IPR007125">
    <property type="entry name" value="Histone_H2A/H2B/H3"/>
</dbReference>
<dbReference type="InterPro" id="IPR000558">
    <property type="entry name" value="Histone_H2B"/>
</dbReference>
<dbReference type="InterPro" id="IPR055333">
    <property type="entry name" value="HISTONE_H2B_site"/>
</dbReference>
<dbReference type="PANTHER" id="PTHR23428">
    <property type="entry name" value="HISTONE H2B"/>
    <property type="match status" value="1"/>
</dbReference>
<dbReference type="Pfam" id="PF00125">
    <property type="entry name" value="Histone"/>
    <property type="match status" value="1"/>
</dbReference>
<dbReference type="PRINTS" id="PR00621">
    <property type="entry name" value="HISTONEH2B"/>
</dbReference>
<dbReference type="SMART" id="SM00427">
    <property type="entry name" value="H2B"/>
    <property type="match status" value="1"/>
</dbReference>
<dbReference type="SUPFAM" id="SSF47113">
    <property type="entry name" value="Histone-fold"/>
    <property type="match status" value="1"/>
</dbReference>
<dbReference type="PROSITE" id="PS00357">
    <property type="entry name" value="HISTONE_H2B"/>
    <property type="match status" value="1"/>
</dbReference>
<proteinExistence type="evidence at protein level"/>
<sequence>MPEPSRSTPAPKKGSKKAITKAQKKDGKKRKRGRKESYSIYVYKVLKQVHPDTGISSKAMGIMNSFVNDIFERIASEASRLAHYNKRSTITSREVQTAVRLLLPGELAKHAVSEGTKAVTKYTSSK</sequence>
<reference key="1">
    <citation type="journal article" date="2002" name="Genomics">
        <title>The human and mouse replication-dependent histone genes.</title>
        <authorList>
            <person name="Marzluff W.F."/>
            <person name="Gongidi P."/>
            <person name="Woods K.R."/>
            <person name="Jin J."/>
            <person name="Maltais L.J."/>
        </authorList>
    </citation>
    <scope>NUCLEOTIDE SEQUENCE [GENOMIC DNA]</scope>
</reference>
<reference key="2">
    <citation type="journal article" date="2005" name="Science">
        <title>The transcriptional landscape of the mammalian genome.</title>
        <authorList>
            <person name="Carninci P."/>
            <person name="Kasukawa T."/>
            <person name="Katayama S."/>
            <person name="Gough J."/>
            <person name="Frith M.C."/>
            <person name="Maeda N."/>
            <person name="Oyama R."/>
            <person name="Ravasi T."/>
            <person name="Lenhard B."/>
            <person name="Wells C."/>
            <person name="Kodzius R."/>
            <person name="Shimokawa K."/>
            <person name="Bajic V.B."/>
            <person name="Brenner S.E."/>
            <person name="Batalov S."/>
            <person name="Forrest A.R."/>
            <person name="Zavolan M."/>
            <person name="Davis M.J."/>
            <person name="Wilming L.G."/>
            <person name="Aidinis V."/>
            <person name="Allen J.E."/>
            <person name="Ambesi-Impiombato A."/>
            <person name="Apweiler R."/>
            <person name="Aturaliya R.N."/>
            <person name="Bailey T.L."/>
            <person name="Bansal M."/>
            <person name="Baxter L."/>
            <person name="Beisel K.W."/>
            <person name="Bersano T."/>
            <person name="Bono H."/>
            <person name="Chalk A.M."/>
            <person name="Chiu K.P."/>
            <person name="Choudhary V."/>
            <person name="Christoffels A."/>
            <person name="Clutterbuck D.R."/>
            <person name="Crowe M.L."/>
            <person name="Dalla E."/>
            <person name="Dalrymple B.P."/>
            <person name="de Bono B."/>
            <person name="Della Gatta G."/>
            <person name="di Bernardo D."/>
            <person name="Down T."/>
            <person name="Engstrom P."/>
            <person name="Fagiolini M."/>
            <person name="Faulkner G."/>
            <person name="Fletcher C.F."/>
            <person name="Fukushima T."/>
            <person name="Furuno M."/>
            <person name="Futaki S."/>
            <person name="Gariboldi M."/>
            <person name="Georgii-Hemming P."/>
            <person name="Gingeras T.R."/>
            <person name="Gojobori T."/>
            <person name="Green R.E."/>
            <person name="Gustincich S."/>
            <person name="Harbers M."/>
            <person name="Hayashi Y."/>
            <person name="Hensch T.K."/>
            <person name="Hirokawa N."/>
            <person name="Hill D."/>
            <person name="Huminiecki L."/>
            <person name="Iacono M."/>
            <person name="Ikeo K."/>
            <person name="Iwama A."/>
            <person name="Ishikawa T."/>
            <person name="Jakt M."/>
            <person name="Kanapin A."/>
            <person name="Katoh M."/>
            <person name="Kawasawa Y."/>
            <person name="Kelso J."/>
            <person name="Kitamura H."/>
            <person name="Kitano H."/>
            <person name="Kollias G."/>
            <person name="Krishnan S.P."/>
            <person name="Kruger A."/>
            <person name="Kummerfeld S.K."/>
            <person name="Kurochkin I.V."/>
            <person name="Lareau L.F."/>
            <person name="Lazarevic D."/>
            <person name="Lipovich L."/>
            <person name="Liu J."/>
            <person name="Liuni S."/>
            <person name="McWilliam S."/>
            <person name="Madan Babu M."/>
            <person name="Madera M."/>
            <person name="Marchionni L."/>
            <person name="Matsuda H."/>
            <person name="Matsuzawa S."/>
            <person name="Miki H."/>
            <person name="Mignone F."/>
            <person name="Miyake S."/>
            <person name="Morris K."/>
            <person name="Mottagui-Tabar S."/>
            <person name="Mulder N."/>
            <person name="Nakano N."/>
            <person name="Nakauchi H."/>
            <person name="Ng P."/>
            <person name="Nilsson R."/>
            <person name="Nishiguchi S."/>
            <person name="Nishikawa S."/>
            <person name="Nori F."/>
            <person name="Ohara O."/>
            <person name="Okazaki Y."/>
            <person name="Orlando V."/>
            <person name="Pang K.C."/>
            <person name="Pavan W.J."/>
            <person name="Pavesi G."/>
            <person name="Pesole G."/>
            <person name="Petrovsky N."/>
            <person name="Piazza S."/>
            <person name="Reed J."/>
            <person name="Reid J.F."/>
            <person name="Ring B.Z."/>
            <person name="Ringwald M."/>
            <person name="Rost B."/>
            <person name="Ruan Y."/>
            <person name="Salzberg S.L."/>
            <person name="Sandelin A."/>
            <person name="Schneider C."/>
            <person name="Schoenbach C."/>
            <person name="Sekiguchi K."/>
            <person name="Semple C.A."/>
            <person name="Seno S."/>
            <person name="Sessa L."/>
            <person name="Sheng Y."/>
            <person name="Shibata Y."/>
            <person name="Shimada H."/>
            <person name="Shimada K."/>
            <person name="Silva D."/>
            <person name="Sinclair B."/>
            <person name="Sperling S."/>
            <person name="Stupka E."/>
            <person name="Sugiura K."/>
            <person name="Sultana R."/>
            <person name="Takenaka Y."/>
            <person name="Taki K."/>
            <person name="Tammoja K."/>
            <person name="Tan S.L."/>
            <person name="Tang S."/>
            <person name="Taylor M.S."/>
            <person name="Tegner J."/>
            <person name="Teichmann S.A."/>
            <person name="Ueda H.R."/>
            <person name="van Nimwegen E."/>
            <person name="Verardo R."/>
            <person name="Wei C.L."/>
            <person name="Yagi K."/>
            <person name="Yamanishi H."/>
            <person name="Zabarovsky E."/>
            <person name="Zhu S."/>
            <person name="Zimmer A."/>
            <person name="Hide W."/>
            <person name="Bult C."/>
            <person name="Grimmond S.M."/>
            <person name="Teasdale R.D."/>
            <person name="Liu E.T."/>
            <person name="Brusic V."/>
            <person name="Quackenbush J."/>
            <person name="Wahlestedt C."/>
            <person name="Mattick J.S."/>
            <person name="Hume D.A."/>
            <person name="Kai C."/>
            <person name="Sasaki D."/>
            <person name="Tomaru Y."/>
            <person name="Fukuda S."/>
            <person name="Kanamori-Katayama M."/>
            <person name="Suzuki M."/>
            <person name="Aoki J."/>
            <person name="Arakawa T."/>
            <person name="Iida J."/>
            <person name="Imamura K."/>
            <person name="Itoh M."/>
            <person name="Kato T."/>
            <person name="Kawaji H."/>
            <person name="Kawagashira N."/>
            <person name="Kawashima T."/>
            <person name="Kojima M."/>
            <person name="Kondo S."/>
            <person name="Konno H."/>
            <person name="Nakano K."/>
            <person name="Ninomiya N."/>
            <person name="Nishio T."/>
            <person name="Okada M."/>
            <person name="Plessy C."/>
            <person name="Shibata K."/>
            <person name="Shiraki T."/>
            <person name="Suzuki S."/>
            <person name="Tagami M."/>
            <person name="Waki K."/>
            <person name="Watahiki A."/>
            <person name="Okamura-Oho Y."/>
            <person name="Suzuki H."/>
            <person name="Kawai J."/>
            <person name="Hayashizaki Y."/>
        </authorList>
    </citation>
    <scope>NUCLEOTIDE SEQUENCE [LARGE SCALE MRNA]</scope>
    <source>
        <strain>C57BL/6J</strain>
        <tissue>Cerebellum</tissue>
    </source>
</reference>
<reference key="3">
    <citation type="journal article" date="2004" name="Genome Res.">
        <title>The status, quality, and expansion of the NIH full-length cDNA project: the Mammalian Gene Collection (MGC).</title>
        <authorList>
            <consortium name="The MGC Project Team"/>
        </authorList>
    </citation>
    <scope>NUCLEOTIDE SEQUENCE [LARGE SCALE MRNA]</scope>
    <source>
        <strain>C57BL/6J</strain>
        <tissue>Brain</tissue>
    </source>
</reference>
<reference key="4">
    <citation type="journal article" date="2004" name="J. Exp. Med.">
        <title>Phosphorylation of histone H2B at DNA double-strand breaks.</title>
        <authorList>
            <person name="Fernandez-Capetillo O."/>
            <person name="Allis C.D."/>
            <person name="Nussenzweig A."/>
        </authorList>
    </citation>
    <scope>SUBCELLULAR LOCATION</scope>
    <scope>PHOSPHORYLATION AT SER-15</scope>
</reference>
<reference key="5">
    <citation type="journal article" date="2005" name="Immunity">
        <title>Histone modifications associated with somatic hypermutation.</title>
        <authorList>
            <person name="Odegard V.H."/>
            <person name="Kim S.T."/>
            <person name="Anderson S.M."/>
            <person name="Shlomchik M.J."/>
            <person name="Schatz D.G."/>
        </authorList>
    </citation>
    <scope>PHOSPHORYLATION AT SER-15</scope>
</reference>
<reference key="6">
    <citation type="journal article" date="2010" name="Science">
        <title>Signaling kinase AMPK activates stress-promoted transcription via histone H2B phosphorylation.</title>
        <authorList>
            <person name="Bungard D."/>
            <person name="Fuerth B.J."/>
            <person name="Zeng P.Y."/>
            <person name="Faubert B."/>
            <person name="Maas N.L."/>
            <person name="Viollet B."/>
            <person name="Carling D."/>
            <person name="Thompson C.B."/>
            <person name="Jones R.G."/>
            <person name="Berger S.L."/>
        </authorList>
    </citation>
    <scope>PHOSPHORYLATION AT SER-37</scope>
</reference>
<reference key="7">
    <citation type="journal article" date="2011" name="Cell">
        <title>Identification of 67 histone marks and histone lysine crotonylation as a new type of histone modification.</title>
        <authorList>
            <person name="Tan M."/>
            <person name="Luo H."/>
            <person name="Lee S."/>
            <person name="Jin F."/>
            <person name="Yang J.S."/>
            <person name="Montellier E."/>
            <person name="Buchou T."/>
            <person name="Cheng Z."/>
            <person name="Rousseaux S."/>
            <person name="Rajagopal N."/>
            <person name="Lu Z."/>
            <person name="Ye Z."/>
            <person name="Zhu Q."/>
            <person name="Wysocka J."/>
            <person name="Ye Y."/>
            <person name="Khochbin S."/>
            <person name="Ren B."/>
            <person name="Zhao Y."/>
        </authorList>
    </citation>
    <scope>CROTONYLATION AT LYS-12; LYS-13; LYS-16; LYS-17; LYS-21; LYS-24 AND LYS-35</scope>
</reference>
<reference key="8">
    <citation type="journal article" date="2012" name="Mol. Cell. Proteomics">
        <title>Lysine succinylation and lysine malonylation in histones.</title>
        <authorList>
            <person name="Xie Z."/>
            <person name="Dai J."/>
            <person name="Dai L."/>
            <person name="Tan M."/>
            <person name="Cheng Z."/>
            <person name="Wu Y."/>
            <person name="Boeke J.D."/>
            <person name="Zhao Y."/>
        </authorList>
    </citation>
    <scope>SUCCINYLATION AT LYS-121</scope>
</reference>
<reference key="9">
    <citation type="journal article" date="2014" name="Nat. Chem. Biol.">
        <title>Lysine 2-hydroxyisobutyrylation is a widely distributed active histone mark.</title>
        <authorList>
            <person name="Dai L."/>
            <person name="Peng C."/>
            <person name="Montellier E."/>
            <person name="Lu Z."/>
            <person name="Chen Y."/>
            <person name="Ishii H."/>
            <person name="Debernardi A."/>
            <person name="Buchou T."/>
            <person name="Rousseaux S."/>
            <person name="Jin F."/>
            <person name="Sabari B.R."/>
            <person name="Deng Z."/>
            <person name="Allis C.D."/>
            <person name="Ren B."/>
            <person name="Khochbin S."/>
            <person name="Zhao Y."/>
        </authorList>
    </citation>
    <scope>HYDROXYBUTYRYLATION AT LYS-13; LYS-21; LYS-24; LYS-25; LYS-35; LYS-44; LYS-47; LYS-58; LYS-86; LYS-109; LYS-117 AND LYS-121</scope>
</reference>
<reference key="10">
    <citation type="journal article" date="2016" name="Mol. Cell">
        <title>Metabolic regulation of gene expression by histone lysine beta-hydroxybutyrylation.</title>
        <authorList>
            <person name="Xie Z."/>
            <person name="Zhang D."/>
            <person name="Chung D."/>
            <person name="Tang Z."/>
            <person name="Huang H."/>
            <person name="Dai L."/>
            <person name="Qi S."/>
            <person name="Li J."/>
            <person name="Colak G."/>
            <person name="Chen Y."/>
            <person name="Xia C."/>
            <person name="Peng C."/>
            <person name="Ruan H."/>
            <person name="Kirkey M."/>
            <person name="Wang D."/>
            <person name="Jensen L.M."/>
            <person name="Kwon O.K."/>
            <person name="Lee S."/>
            <person name="Pletcher S.D."/>
            <person name="Tan M."/>
            <person name="Lombard D.B."/>
            <person name="White K.P."/>
            <person name="Zhao H."/>
            <person name="Li J."/>
            <person name="Roeder R.G."/>
            <person name="Yang X."/>
            <person name="Zhao Y."/>
        </authorList>
    </citation>
    <scope>HYDROXYBUTYRYLATION AT LYS-12; LYS-21; LYS-35; LYS-109 AND LYS-117</scope>
</reference>
<reference key="11">
    <citation type="journal article" date="2019" name="Nature">
        <title>Metabolic regulation of gene expression by histone lactylation.</title>
        <authorList>
            <person name="Zhang D."/>
            <person name="Tang Z."/>
            <person name="Huang H."/>
            <person name="Zhou G."/>
            <person name="Cui C."/>
            <person name="Weng Y."/>
            <person name="Liu W."/>
            <person name="Kim S."/>
            <person name="Lee S."/>
            <person name="Perez-Neut M."/>
            <person name="Ding J."/>
            <person name="Czyz D."/>
            <person name="Hu R."/>
            <person name="Ye Z."/>
            <person name="He M."/>
            <person name="Zheng Y.G."/>
            <person name="Shuman H.A."/>
            <person name="Dai L."/>
            <person name="Ren B."/>
            <person name="Roeder R.G."/>
            <person name="Becker L."/>
            <person name="Zhao Y."/>
        </authorList>
    </citation>
    <scope>LACTYLATION AT LYS-12; LYS-16; LYS-17; LYS-21; LYS-86; LYS-109 AND LYS-117</scope>
</reference>
<reference key="12">
    <citation type="journal article" date="2020" name="Mol. Cell">
        <title>Functional interplay between histone H2B ADP-ribosylation and phosphorylation controls adipogenesis.</title>
        <authorList>
            <person name="Huang D."/>
            <person name="Camacho C.V."/>
            <person name="Setlem R."/>
            <person name="Ryu K.W."/>
            <person name="Parameswaran B."/>
            <person name="Gupta R.K."/>
            <person name="Kraus W.L."/>
        </authorList>
    </citation>
    <scope>ADP-RIBOSYLATION AT GLU-36</scope>
    <scope>PHOSPHORYLATION AT SER-37</scope>
</reference>
<reference key="13">
    <citation type="journal article" date="2005" name="Mol. Cell. Biol.">
        <title>Structural characterization of the histone variant macroH2A.</title>
        <authorList>
            <person name="Chakravarthy S."/>
            <person name="Gundimella S.K."/>
            <person name="Caron C."/>
            <person name="Perche P.-Y."/>
            <person name="Pehrson J.R."/>
            <person name="Khochbin S."/>
            <person name="Luger K."/>
        </authorList>
    </citation>
    <scope>X-RAY CRYSTALLOGRAPHY (3.0 ANGSTROMS) IN COMPLEX WITH THE NUCLEOSOME CORE PARTICLE</scope>
</reference>
<feature type="initiator methionine" description="Removed" evidence="1">
    <location>
        <position position="1"/>
    </location>
</feature>
<feature type="chain" id="PRO_0000244837" description="H2B.U histone 2">
    <location>
        <begin position="2"/>
        <end position="126"/>
    </location>
</feature>
<feature type="region of interest" description="Disordered" evidence="8">
    <location>
        <begin position="1"/>
        <end position="35"/>
    </location>
</feature>
<feature type="modified residue" description="N-acetylproline" evidence="1">
    <location>
        <position position="2"/>
    </location>
</feature>
<feature type="modified residue" description="ADP-ribosyl glutamic acid" evidence="2">
    <location>
        <position position="3"/>
    </location>
</feature>
<feature type="modified residue" description="ADP-ribosylserine" evidence="2">
    <location>
        <position position="7"/>
    </location>
</feature>
<feature type="modified residue" description="N6-(beta-hydroxybutyryl)lysine; alternate" evidence="16">
    <location>
        <position position="12"/>
    </location>
</feature>
<feature type="modified residue" description="N6-acetyllysine; alternate" evidence="3">
    <location>
        <position position="12"/>
    </location>
</feature>
<feature type="modified residue" description="N6-crotonyllysine; alternate" evidence="13">
    <location>
        <position position="12"/>
    </location>
</feature>
<feature type="modified residue" description="N6-lactoyllysine; alternate" evidence="17">
    <location>
        <position position="12"/>
    </location>
</feature>
<feature type="modified residue" description="N6-(2-hydroxyisobutyryl)lysine; alternate" evidence="15">
    <location>
        <position position="13"/>
    </location>
</feature>
<feature type="modified residue" description="N6-acetyllysine; alternate" evidence="2">
    <location>
        <position position="13"/>
    </location>
</feature>
<feature type="modified residue" description="N6-crotonyllysine; alternate" evidence="13">
    <location>
        <position position="13"/>
    </location>
</feature>
<feature type="modified residue" description="Phosphoserine; by STK4/MST1" evidence="9 10">
    <location>
        <position position="15"/>
    </location>
</feature>
<feature type="modified residue" description="N6-acetyllysine; alternate" evidence="2">
    <location>
        <position position="16"/>
    </location>
</feature>
<feature type="modified residue" description="N6-crotonyllysine; alternate" evidence="13">
    <location>
        <position position="16"/>
    </location>
</feature>
<feature type="modified residue" description="N6-lactoyllysine; alternate" evidence="17">
    <location>
        <position position="16"/>
    </location>
</feature>
<feature type="modified residue" description="N6-acetyllysine; alternate" evidence="2">
    <location>
        <position position="17"/>
    </location>
</feature>
<feature type="modified residue" description="N6-crotonyllysine; alternate" evidence="13">
    <location>
        <position position="17"/>
    </location>
</feature>
<feature type="modified residue" description="N6-glutaryllysine; alternate" evidence="2">
    <location>
        <position position="17"/>
    </location>
</feature>
<feature type="modified residue" description="N6-lactoyllysine; alternate" evidence="17">
    <location>
        <position position="17"/>
    </location>
</feature>
<feature type="modified residue" description="N6-(2-hydroxyisobutyryl)lysine; alternate" evidence="15">
    <location>
        <position position="21"/>
    </location>
</feature>
<feature type="modified residue" description="N6-(beta-hydroxybutyryl)lysine; alternate" evidence="16">
    <location>
        <position position="21"/>
    </location>
</feature>
<feature type="modified residue" description="N6-acetyllysine; alternate" evidence="2">
    <location>
        <position position="21"/>
    </location>
</feature>
<feature type="modified residue" description="N6-butyryllysine; alternate" evidence="2">
    <location>
        <position position="21"/>
    </location>
</feature>
<feature type="modified residue" description="N6-crotonyllysine; alternate" evidence="13">
    <location>
        <position position="21"/>
    </location>
</feature>
<feature type="modified residue" description="N6-lactoyllysine; alternate" evidence="17">
    <location>
        <position position="21"/>
    </location>
</feature>
<feature type="modified residue" description="N6-(2-hydroxyisobutyryl)lysine; alternate" evidence="15">
    <location>
        <position position="24"/>
    </location>
</feature>
<feature type="modified residue" description="N6-acetyllysine; alternate" evidence="2">
    <location>
        <position position="24"/>
    </location>
</feature>
<feature type="modified residue" description="N6-crotonyllysine; alternate" evidence="13">
    <location>
        <position position="24"/>
    </location>
</feature>
<feature type="modified residue" description="N6-lactoyllysine; alternate" evidence="2">
    <location>
        <position position="24"/>
    </location>
</feature>
<feature type="modified residue" description="N6-(2-hydroxyisobutyryl)lysine" evidence="15">
    <location>
        <position position="25"/>
    </location>
</feature>
<feature type="modified residue" description="N6-(2-hydroxyisobutyryl)lysine; alternate" evidence="15">
    <location>
        <position position="35"/>
    </location>
</feature>
<feature type="modified residue" description="N6-(beta-hydroxybutyryl)lysine; alternate" evidence="16">
    <location>
        <position position="35"/>
    </location>
</feature>
<feature type="modified residue" description="N6-crotonyllysine; alternate" evidence="13">
    <location>
        <position position="35"/>
    </location>
</feature>
<feature type="modified residue" description="N6-glutaryllysine; alternate" evidence="2">
    <location>
        <position position="35"/>
    </location>
</feature>
<feature type="modified residue" description="N6-succinyllysine; alternate" evidence="2">
    <location>
        <position position="35"/>
    </location>
</feature>
<feature type="modified residue" description="PolyADP-ribosyl glutamic acid" evidence="18">
    <location>
        <position position="36"/>
    </location>
</feature>
<feature type="modified residue" description="Phosphoserine; by AMPK" evidence="12 18">
    <location>
        <position position="37"/>
    </location>
</feature>
<feature type="modified residue" description="N6-(2-hydroxyisobutyryl)lysine; alternate" evidence="15">
    <location>
        <position position="44"/>
    </location>
</feature>
<feature type="modified residue" description="N6-glutaryllysine; alternate" evidence="2">
    <location>
        <position position="44"/>
    </location>
</feature>
<feature type="modified residue" description="N6-lactoyllysine; alternate" evidence="2">
    <location>
        <position position="44"/>
    </location>
</feature>
<feature type="modified residue" description="N6-(2-hydroxyisobutyryl)lysine; alternate" evidence="15">
    <location>
        <position position="47"/>
    </location>
</feature>
<feature type="modified residue" description="N6-glutaryllysine; alternate" evidence="2">
    <location>
        <position position="47"/>
    </location>
</feature>
<feature type="modified residue" description="N6-methyllysine; alternate" evidence="3">
    <location>
        <position position="47"/>
    </location>
</feature>
<feature type="modified residue" description="N6,N6-dimethyllysine; alternate" evidence="3">
    <location>
        <position position="58"/>
    </location>
</feature>
<feature type="modified residue" description="N6-(2-hydroxyisobutyryl)lysine; alternate" evidence="15">
    <location>
        <position position="58"/>
    </location>
</feature>
<feature type="modified residue" description="Dimethylated arginine" evidence="7">
    <location>
        <position position="80"/>
    </location>
</feature>
<feature type="modified residue" description="N6,N6,N6-trimethyllysine; alternate" evidence="7">
    <location>
        <position position="86"/>
    </location>
</feature>
<feature type="modified residue" description="N6-(2-hydroxyisobutyryl)lysine; alternate" evidence="15">
    <location>
        <position position="86"/>
    </location>
</feature>
<feature type="modified residue" description="N6-acetyllysine; alternate" evidence="7">
    <location>
        <position position="86"/>
    </location>
</feature>
<feature type="modified residue" description="N6-lactoyllysine; alternate" evidence="17">
    <location>
        <position position="86"/>
    </location>
</feature>
<feature type="modified residue" description="Omega-N-methylarginine" evidence="7">
    <location>
        <position position="87"/>
    </location>
</feature>
<feature type="modified residue" description="Omega-N-methylarginine" evidence="7">
    <location>
        <position position="93"/>
    </location>
</feature>
<feature type="modified residue" description="N6-(2-hydroxyisobutyryl)lysine; alternate" evidence="15">
    <location>
        <position position="109"/>
    </location>
</feature>
<feature type="modified residue" description="N6-(beta-hydroxybutyryl)lysine; alternate" evidence="16">
    <location>
        <position position="109"/>
    </location>
</feature>
<feature type="modified residue" description="N6-glutaryllysine; alternate" evidence="2">
    <location>
        <position position="109"/>
    </location>
</feature>
<feature type="modified residue" description="N6-lactoyllysine; alternate" evidence="17">
    <location>
        <position position="109"/>
    </location>
</feature>
<feature type="modified residue" description="N6-methyllysine; alternate" evidence="3">
    <location>
        <position position="109"/>
    </location>
</feature>
<feature type="modified residue" description="Phosphothreonine" evidence="5">
    <location>
        <position position="116"/>
    </location>
</feature>
<feature type="modified residue" description="N6-(2-hydroxyisobutyryl)lysine; alternate" evidence="15">
    <location>
        <position position="117"/>
    </location>
</feature>
<feature type="modified residue" description="N6-(beta-hydroxybutyryl)lysine; alternate" evidence="16">
    <location>
        <position position="117"/>
    </location>
</feature>
<feature type="modified residue" description="N6-glutaryllysine; alternate" evidence="2">
    <location>
        <position position="117"/>
    </location>
</feature>
<feature type="modified residue" description="N6-lactoyllysine; alternate" evidence="17">
    <location>
        <position position="117"/>
    </location>
</feature>
<feature type="modified residue" description="N6-methylated lysine; alternate" evidence="5">
    <location>
        <position position="117"/>
    </location>
</feature>
<feature type="modified residue" description="N6-succinyllysine; alternate" evidence="2">
    <location>
        <position position="117"/>
    </location>
</feature>
<feature type="modified residue" description="N6-(2-hydroxyisobutyryl)lysine; alternate" evidence="15">
    <location>
        <position position="121"/>
    </location>
</feature>
<feature type="modified residue" description="N6-glutaryllysine; alternate" evidence="2">
    <location>
        <position position="121"/>
    </location>
</feature>
<feature type="modified residue" description="N6-lactoyllysine; alternate" evidence="2">
    <location>
        <position position="121"/>
    </location>
</feature>
<feature type="modified residue" description="N6-succinyllysine; alternate" evidence="14">
    <location>
        <position position="121"/>
    </location>
</feature>
<feature type="glycosylation site" description="O-linked (GlcNAc) serine" evidence="3">
    <location>
        <position position="113"/>
    </location>
</feature>
<feature type="cross-link" description="Glycyl lysine isopeptide (Lys-Gly) (interchain with G-Cter in SUMO2); alternate" evidence="6">
    <location>
        <position position="21"/>
    </location>
</feature>
<feature type="cross-link" description="Glycyl lysine isopeptide (Lys-Gly) (interchain with G-Cter in ubiquitin); alternate" evidence="2">
    <location>
        <position position="35"/>
    </location>
</feature>
<feature type="cross-link" description="Glycyl lysine isopeptide (Lys-Gly) (interchain with G-Cter in ubiquitin); alternate" evidence="4">
    <location>
        <position position="121"/>
    </location>
</feature>
<feature type="helix" evidence="22">
    <location>
        <begin position="39"/>
        <end position="49"/>
    </location>
</feature>
<feature type="helix" evidence="22">
    <location>
        <begin position="57"/>
        <end position="84"/>
    </location>
</feature>
<feature type="strand" evidence="22">
    <location>
        <begin position="88"/>
        <end position="90"/>
    </location>
</feature>
<feature type="helix" evidence="22">
    <location>
        <begin position="92"/>
        <end position="102"/>
    </location>
</feature>
<feature type="helix" evidence="22">
    <location>
        <begin position="106"/>
        <end position="123"/>
    </location>
</feature>
<name>H2B3A_MOUSE</name>